<name>LEA47_ARATH</name>
<comment type="function">
    <text evidence="5">LEA proteins are late embryonic proteins abundant in higher plant seed embryos. The function of those proteins is not known.</text>
</comment>
<comment type="subcellular location">
    <subcellularLocation>
        <location evidence="4">Cytoplasm</location>
    </subcellularLocation>
    <subcellularLocation>
        <location evidence="4">Nucleus</location>
    </subcellularLocation>
</comment>
<comment type="similarity">
    <text evidence="5">Belongs to the LEA type SMP family.</text>
</comment>
<accession>Q8GWT7</accession>
<evidence type="ECO:0000250" key="1">
    <source>
        <dbReference type="UniProtKB" id="Q9LJ97"/>
    </source>
</evidence>
<evidence type="ECO:0000255" key="2"/>
<evidence type="ECO:0000256" key="3">
    <source>
        <dbReference type="SAM" id="MobiDB-lite"/>
    </source>
</evidence>
<evidence type="ECO:0000269" key="4">
    <source>
    </source>
</evidence>
<evidence type="ECO:0000305" key="5"/>
<evidence type="ECO:0000312" key="6">
    <source>
        <dbReference type="Araport" id="AT5G27980"/>
    </source>
</evidence>
<evidence type="ECO:0000312" key="7">
    <source>
        <dbReference type="EMBL" id="BAC43241.1"/>
    </source>
</evidence>
<protein>
    <recommendedName>
        <fullName evidence="5">Late embryogenesis abundant protein 47</fullName>
        <shortName evidence="5">LEA 47</shortName>
    </recommendedName>
</protein>
<organism evidence="7">
    <name type="scientific">Arabidopsis thaliana</name>
    <name type="common">Mouse-ear cress</name>
    <dbReference type="NCBI Taxonomy" id="3702"/>
    <lineage>
        <taxon>Eukaryota</taxon>
        <taxon>Viridiplantae</taxon>
        <taxon>Streptophyta</taxon>
        <taxon>Embryophyta</taxon>
        <taxon>Tracheophyta</taxon>
        <taxon>Spermatophyta</taxon>
        <taxon>Magnoliopsida</taxon>
        <taxon>eudicotyledons</taxon>
        <taxon>Gunneridae</taxon>
        <taxon>Pentapetalae</taxon>
        <taxon>rosids</taxon>
        <taxon>malvids</taxon>
        <taxon>Brassicales</taxon>
        <taxon>Brassicaceae</taxon>
        <taxon>Camelineae</taxon>
        <taxon>Arabidopsis</taxon>
    </lineage>
</organism>
<feature type="chain" id="PRO_0000436061" description="Late embryogenesis abundant protein 47">
    <location>
        <begin position="1"/>
        <end position="192"/>
    </location>
</feature>
<feature type="domain" description="SMP 1" evidence="2">
    <location>
        <begin position="68"/>
        <end position="125"/>
    </location>
</feature>
<feature type="domain" description="SMP 2" evidence="2">
    <location>
        <begin position="133"/>
        <end position="190"/>
    </location>
</feature>
<feature type="region of interest" description="Disordered" evidence="3">
    <location>
        <begin position="146"/>
        <end position="174"/>
    </location>
</feature>
<feature type="short sequence motif" description="Nuclear localization signal (NLS)" evidence="1">
    <location>
        <begin position="5"/>
        <end position="9"/>
    </location>
</feature>
<feature type="compositionally biased region" description="Basic and acidic residues" evidence="3">
    <location>
        <begin position="147"/>
        <end position="158"/>
    </location>
</feature>
<dbReference type="EMBL" id="AC007627">
    <property type="status" value="NOT_ANNOTATED_CDS"/>
    <property type="molecule type" value="Genomic_DNA"/>
</dbReference>
<dbReference type="EMBL" id="CP002688">
    <property type="protein sequence ID" value="AED93755.1"/>
    <property type="molecule type" value="Genomic_DNA"/>
</dbReference>
<dbReference type="EMBL" id="AK118645">
    <property type="protein sequence ID" value="BAC43241.1"/>
    <property type="molecule type" value="mRNA"/>
</dbReference>
<dbReference type="RefSeq" id="NP_198150.1">
    <property type="nucleotide sequence ID" value="NM_122681.4"/>
</dbReference>
<dbReference type="FunCoup" id="Q8GWT7">
    <property type="interactions" value="6"/>
</dbReference>
<dbReference type="STRING" id="3702.Q8GWT7"/>
<dbReference type="iPTMnet" id="Q8GWT7"/>
<dbReference type="PaxDb" id="3702-AT5G27980.1"/>
<dbReference type="ProteomicsDB" id="230199"/>
<dbReference type="EnsemblPlants" id="AT5G27980.1">
    <property type="protein sequence ID" value="AT5G27980.1"/>
    <property type="gene ID" value="AT5G27980"/>
</dbReference>
<dbReference type="GeneID" id="832868"/>
<dbReference type="Gramene" id="AT5G27980.1">
    <property type="protein sequence ID" value="AT5G27980.1"/>
    <property type="gene ID" value="AT5G27980"/>
</dbReference>
<dbReference type="KEGG" id="ath:AT5G27980"/>
<dbReference type="Araport" id="AT5G27980"/>
<dbReference type="TAIR" id="AT5G27980"/>
<dbReference type="eggNOG" id="ENOG502R41N">
    <property type="taxonomic scope" value="Eukaryota"/>
</dbReference>
<dbReference type="HOGENOM" id="CLU_075678_1_0_1"/>
<dbReference type="InParanoid" id="Q8GWT7"/>
<dbReference type="OMA" id="LQKPIDC"/>
<dbReference type="OrthoDB" id="2014755at2759"/>
<dbReference type="PhylomeDB" id="Q8GWT7"/>
<dbReference type="PRO" id="PR:Q8GWT7"/>
<dbReference type="Proteomes" id="UP000006548">
    <property type="component" value="Chromosome 5"/>
</dbReference>
<dbReference type="ExpressionAtlas" id="Q8GWT7">
    <property type="expression patterns" value="baseline and differential"/>
</dbReference>
<dbReference type="GO" id="GO:0005829">
    <property type="term" value="C:cytosol"/>
    <property type="evidence" value="ECO:0007005"/>
    <property type="project" value="TAIR"/>
</dbReference>
<dbReference type="GO" id="GO:0005634">
    <property type="term" value="C:nucleus"/>
    <property type="evidence" value="ECO:0000314"/>
    <property type="project" value="UniProtKB"/>
</dbReference>
<dbReference type="InterPro" id="IPR042971">
    <property type="entry name" value="LEA_SMP"/>
</dbReference>
<dbReference type="InterPro" id="IPR007011">
    <property type="entry name" value="LEA_SMP_dom"/>
</dbReference>
<dbReference type="PANTHER" id="PTHR31174:SF34">
    <property type="entry name" value="LATE EMBRYOGENESIS ABUNDANT PROTEIN 47"/>
    <property type="match status" value="1"/>
</dbReference>
<dbReference type="PANTHER" id="PTHR31174">
    <property type="entry name" value="SEED MATURATION FAMILY PROTEIN"/>
    <property type="match status" value="1"/>
</dbReference>
<dbReference type="Pfam" id="PF04927">
    <property type="entry name" value="SMP"/>
    <property type="match status" value="2"/>
</dbReference>
<proteinExistence type="evidence at transcript level"/>
<reference key="1">
    <citation type="journal article" date="2000" name="Nature">
        <title>Sequence and analysis of chromosome 5 of the plant Arabidopsis thaliana.</title>
        <authorList>
            <person name="Tabata S."/>
            <person name="Kaneko T."/>
            <person name="Nakamura Y."/>
            <person name="Kotani H."/>
            <person name="Kato T."/>
            <person name="Asamizu E."/>
            <person name="Miyajima N."/>
            <person name="Sasamoto S."/>
            <person name="Kimura T."/>
            <person name="Hosouchi T."/>
            <person name="Kawashima K."/>
            <person name="Kohara M."/>
            <person name="Matsumoto M."/>
            <person name="Matsuno A."/>
            <person name="Muraki A."/>
            <person name="Nakayama S."/>
            <person name="Nakazaki N."/>
            <person name="Naruo K."/>
            <person name="Okumura S."/>
            <person name="Shinpo S."/>
            <person name="Takeuchi C."/>
            <person name="Wada T."/>
            <person name="Watanabe A."/>
            <person name="Yamada M."/>
            <person name="Yasuda M."/>
            <person name="Sato S."/>
            <person name="de la Bastide M."/>
            <person name="Huang E."/>
            <person name="Spiegel L."/>
            <person name="Gnoj L."/>
            <person name="O'Shaughnessy A."/>
            <person name="Preston R."/>
            <person name="Habermann K."/>
            <person name="Murray J."/>
            <person name="Johnson D."/>
            <person name="Rohlfing T."/>
            <person name="Nelson J."/>
            <person name="Stoneking T."/>
            <person name="Pepin K."/>
            <person name="Spieth J."/>
            <person name="Sekhon M."/>
            <person name="Armstrong J."/>
            <person name="Becker M."/>
            <person name="Belter E."/>
            <person name="Cordum H."/>
            <person name="Cordes M."/>
            <person name="Courtney L."/>
            <person name="Courtney W."/>
            <person name="Dante M."/>
            <person name="Du H."/>
            <person name="Edwards J."/>
            <person name="Fryman J."/>
            <person name="Haakensen B."/>
            <person name="Lamar E."/>
            <person name="Latreille P."/>
            <person name="Leonard S."/>
            <person name="Meyer R."/>
            <person name="Mulvaney E."/>
            <person name="Ozersky P."/>
            <person name="Riley A."/>
            <person name="Strowmatt C."/>
            <person name="Wagner-McPherson C."/>
            <person name="Wollam A."/>
            <person name="Yoakum M."/>
            <person name="Bell M."/>
            <person name="Dedhia N."/>
            <person name="Parnell L."/>
            <person name="Shah R."/>
            <person name="Rodriguez M."/>
            <person name="Hoon See L."/>
            <person name="Vil D."/>
            <person name="Baker J."/>
            <person name="Kirchoff K."/>
            <person name="Toth K."/>
            <person name="King L."/>
            <person name="Bahret A."/>
            <person name="Miller B."/>
            <person name="Marra M.A."/>
            <person name="Martienssen R."/>
            <person name="McCombie W.R."/>
            <person name="Wilson R.K."/>
            <person name="Murphy G."/>
            <person name="Bancroft I."/>
            <person name="Volckaert G."/>
            <person name="Wambutt R."/>
            <person name="Duesterhoeft A."/>
            <person name="Stiekema W."/>
            <person name="Pohl T."/>
            <person name="Entian K.-D."/>
            <person name="Terryn N."/>
            <person name="Hartley N."/>
            <person name="Bent E."/>
            <person name="Johnson S."/>
            <person name="Langham S.-A."/>
            <person name="McCullagh B."/>
            <person name="Robben J."/>
            <person name="Grymonprez B."/>
            <person name="Zimmermann W."/>
            <person name="Ramsperger U."/>
            <person name="Wedler H."/>
            <person name="Balke K."/>
            <person name="Wedler E."/>
            <person name="Peters S."/>
            <person name="van Staveren M."/>
            <person name="Dirkse W."/>
            <person name="Mooijman P."/>
            <person name="Klein Lankhorst R."/>
            <person name="Weitzenegger T."/>
            <person name="Bothe G."/>
            <person name="Rose M."/>
            <person name="Hauf J."/>
            <person name="Berneiser S."/>
            <person name="Hempel S."/>
            <person name="Feldpausch M."/>
            <person name="Lamberth S."/>
            <person name="Villarroel R."/>
            <person name="Gielen J."/>
            <person name="Ardiles W."/>
            <person name="Bents O."/>
            <person name="Lemcke K."/>
            <person name="Kolesov G."/>
            <person name="Mayer K.F.X."/>
            <person name="Rudd S."/>
            <person name="Schoof H."/>
            <person name="Schueller C."/>
            <person name="Zaccaria P."/>
            <person name="Mewes H.-W."/>
            <person name="Bevan M."/>
            <person name="Fransz P.F."/>
        </authorList>
    </citation>
    <scope>NUCLEOTIDE SEQUENCE [LARGE SCALE GENOMIC DNA]</scope>
    <source>
        <strain>cv. Columbia</strain>
    </source>
</reference>
<reference key="2">
    <citation type="journal article" date="2017" name="Plant J.">
        <title>Araport11: a complete reannotation of the Arabidopsis thaliana reference genome.</title>
        <authorList>
            <person name="Cheng C.Y."/>
            <person name="Krishnakumar V."/>
            <person name="Chan A.P."/>
            <person name="Thibaud-Nissen F."/>
            <person name="Schobel S."/>
            <person name="Town C.D."/>
        </authorList>
    </citation>
    <scope>GENOME REANNOTATION</scope>
    <source>
        <strain>cv. Columbia</strain>
    </source>
</reference>
<reference key="3">
    <citation type="journal article" date="2002" name="Science">
        <title>Functional annotation of a full-length Arabidopsis cDNA collection.</title>
        <authorList>
            <person name="Seki M."/>
            <person name="Narusaka M."/>
            <person name="Kamiya A."/>
            <person name="Ishida J."/>
            <person name="Satou M."/>
            <person name="Sakurai T."/>
            <person name="Nakajima M."/>
            <person name="Enju A."/>
            <person name="Akiyama K."/>
            <person name="Oono Y."/>
            <person name="Muramatsu M."/>
            <person name="Hayashizaki Y."/>
            <person name="Kawai J."/>
            <person name="Carninci P."/>
            <person name="Itoh M."/>
            <person name="Ishii Y."/>
            <person name="Arakawa T."/>
            <person name="Shibata K."/>
            <person name="Shinagawa A."/>
            <person name="Shinozaki K."/>
        </authorList>
    </citation>
    <scope>NUCLEOTIDE SEQUENCE [LARGE SCALE MRNA]</scope>
    <source>
        <strain>cv. Columbia</strain>
    </source>
</reference>
<reference key="4">
    <citation type="journal article" date="2008" name="BMC Genomics">
        <title>LEA (late embryogenesis abundant) proteins and their encoding genes in Arabidopsis thaliana.</title>
        <authorList>
            <person name="Hundertmark M."/>
            <person name="Hincha D.K."/>
        </authorList>
    </citation>
    <scope>GENE FAMILY</scope>
    <scope>NOMENCLATURE</scope>
</reference>
<reference key="5">
    <citation type="journal article" date="2014" name="Plant Cell">
        <title>The ubiquitous distribution of late embryogenesis abundant proteins across cell compartments in Arabidopsis offers tailored protection against abiotic stress.</title>
        <authorList>
            <person name="Candat A."/>
            <person name="Paszkiewicz G."/>
            <person name="Neveu M."/>
            <person name="Gautier R."/>
            <person name="Logan D.C."/>
            <person name="Avelange-Macherel M.-H."/>
            <person name="Macherel D."/>
        </authorList>
    </citation>
    <scope>SUBCELLULAR LOCATION</scope>
    <scope>GENE FAMILY</scope>
    <scope>NOMENCLATURE</scope>
</reference>
<sequence length="192" mass="19516">MSEEQLQKPIDCADVKGEAEKISTTEGGIKAAEDKEKGVVAEASGEQAEGEVNQKKVVANPLKSEGTITIGEALEAAVLTAGNKPVEWSDAAAIQAAEVRATGRTNIMPGGVAASAQSAATLNARIGSDDTKTTLADVLTGASSKLPSDKAATRKDAEGVTGAEMRNDPHLTTYPTGVAASVAAAARINQSK</sequence>
<gene>
    <name evidence="6" type="ordered locus">At5g27980</name>
    <name evidence="5" type="ORF">F15F15.50</name>
</gene>
<keyword id="KW-0963">Cytoplasm</keyword>
<keyword id="KW-0539">Nucleus</keyword>
<keyword id="KW-1185">Reference proteome</keyword>
<keyword id="KW-0677">Repeat</keyword>